<organism>
    <name type="scientific">Salmonella paratyphi B (strain ATCC BAA-1250 / SPB7)</name>
    <dbReference type="NCBI Taxonomy" id="1016998"/>
    <lineage>
        <taxon>Bacteria</taxon>
        <taxon>Pseudomonadati</taxon>
        <taxon>Pseudomonadota</taxon>
        <taxon>Gammaproteobacteria</taxon>
        <taxon>Enterobacterales</taxon>
        <taxon>Enterobacteriaceae</taxon>
        <taxon>Salmonella</taxon>
    </lineage>
</organism>
<comment type="catalytic activity">
    <reaction evidence="1">
        <text>tRNA(Lys) + L-lysine + ATP = L-lysyl-tRNA(Lys) + AMP + diphosphate</text>
        <dbReference type="Rhea" id="RHEA:20792"/>
        <dbReference type="Rhea" id="RHEA-COMP:9696"/>
        <dbReference type="Rhea" id="RHEA-COMP:9697"/>
        <dbReference type="ChEBI" id="CHEBI:30616"/>
        <dbReference type="ChEBI" id="CHEBI:32551"/>
        <dbReference type="ChEBI" id="CHEBI:33019"/>
        <dbReference type="ChEBI" id="CHEBI:78442"/>
        <dbReference type="ChEBI" id="CHEBI:78529"/>
        <dbReference type="ChEBI" id="CHEBI:456215"/>
        <dbReference type="EC" id="6.1.1.6"/>
    </reaction>
</comment>
<comment type="cofactor">
    <cofactor evidence="1">
        <name>Mg(2+)</name>
        <dbReference type="ChEBI" id="CHEBI:18420"/>
    </cofactor>
    <text evidence="1">Binds 3 Mg(2+) ions per subunit.</text>
</comment>
<comment type="subunit">
    <text evidence="1">Homodimer.</text>
</comment>
<comment type="subcellular location">
    <subcellularLocation>
        <location evidence="1">Cytoplasm</location>
    </subcellularLocation>
</comment>
<comment type="similarity">
    <text evidence="1">Belongs to the class-II aminoacyl-tRNA synthetase family.</text>
</comment>
<dbReference type="EC" id="6.1.1.6" evidence="1"/>
<dbReference type="EMBL" id="CP000886">
    <property type="protein sequence ID" value="ABX69119.1"/>
    <property type="molecule type" value="Genomic_DNA"/>
</dbReference>
<dbReference type="RefSeq" id="WP_000003339.1">
    <property type="nucleotide sequence ID" value="NC_010102.1"/>
</dbReference>
<dbReference type="SMR" id="A9N3L6"/>
<dbReference type="KEGG" id="spq:SPAB_03787"/>
<dbReference type="PATRIC" id="fig|1016998.12.peg.3568"/>
<dbReference type="HOGENOM" id="CLU_008255_6_0_6"/>
<dbReference type="BioCyc" id="SENT1016998:SPAB_RS15405-MONOMER"/>
<dbReference type="Proteomes" id="UP000008556">
    <property type="component" value="Chromosome"/>
</dbReference>
<dbReference type="GO" id="GO:0005829">
    <property type="term" value="C:cytosol"/>
    <property type="evidence" value="ECO:0007669"/>
    <property type="project" value="TreeGrafter"/>
</dbReference>
<dbReference type="GO" id="GO:0005524">
    <property type="term" value="F:ATP binding"/>
    <property type="evidence" value="ECO:0007669"/>
    <property type="project" value="UniProtKB-UniRule"/>
</dbReference>
<dbReference type="GO" id="GO:0004824">
    <property type="term" value="F:lysine-tRNA ligase activity"/>
    <property type="evidence" value="ECO:0007669"/>
    <property type="project" value="UniProtKB-UniRule"/>
</dbReference>
<dbReference type="GO" id="GO:0000287">
    <property type="term" value="F:magnesium ion binding"/>
    <property type="evidence" value="ECO:0007669"/>
    <property type="project" value="UniProtKB-UniRule"/>
</dbReference>
<dbReference type="GO" id="GO:0000049">
    <property type="term" value="F:tRNA binding"/>
    <property type="evidence" value="ECO:0007669"/>
    <property type="project" value="TreeGrafter"/>
</dbReference>
<dbReference type="GO" id="GO:0006430">
    <property type="term" value="P:lysyl-tRNA aminoacylation"/>
    <property type="evidence" value="ECO:0007669"/>
    <property type="project" value="UniProtKB-UniRule"/>
</dbReference>
<dbReference type="CDD" id="cd00775">
    <property type="entry name" value="LysRS_core"/>
    <property type="match status" value="1"/>
</dbReference>
<dbReference type="CDD" id="cd04322">
    <property type="entry name" value="LysRS_N"/>
    <property type="match status" value="1"/>
</dbReference>
<dbReference type="FunFam" id="2.40.50.140:FF:000024">
    <property type="entry name" value="Lysine--tRNA ligase"/>
    <property type="match status" value="1"/>
</dbReference>
<dbReference type="FunFam" id="3.30.930.10:FF:000001">
    <property type="entry name" value="Lysine--tRNA ligase"/>
    <property type="match status" value="1"/>
</dbReference>
<dbReference type="Gene3D" id="3.30.930.10">
    <property type="entry name" value="Bira Bifunctional Protein, Domain 2"/>
    <property type="match status" value="1"/>
</dbReference>
<dbReference type="Gene3D" id="2.40.50.140">
    <property type="entry name" value="Nucleic acid-binding proteins"/>
    <property type="match status" value="1"/>
</dbReference>
<dbReference type="HAMAP" id="MF_00252">
    <property type="entry name" value="Lys_tRNA_synth_class2"/>
    <property type="match status" value="1"/>
</dbReference>
<dbReference type="InterPro" id="IPR004364">
    <property type="entry name" value="Aa-tRNA-synt_II"/>
</dbReference>
<dbReference type="InterPro" id="IPR006195">
    <property type="entry name" value="aa-tRNA-synth_II"/>
</dbReference>
<dbReference type="InterPro" id="IPR045864">
    <property type="entry name" value="aa-tRNA-synth_II/BPL/LPL"/>
</dbReference>
<dbReference type="InterPro" id="IPR002313">
    <property type="entry name" value="Lys-tRNA-ligase_II"/>
</dbReference>
<dbReference type="InterPro" id="IPR034762">
    <property type="entry name" value="Lys-tRNA-ligase_II_bac/euk"/>
</dbReference>
<dbReference type="InterPro" id="IPR044136">
    <property type="entry name" value="Lys-tRNA-ligase_II_N"/>
</dbReference>
<dbReference type="InterPro" id="IPR018149">
    <property type="entry name" value="Lys-tRNA-synth_II_C"/>
</dbReference>
<dbReference type="InterPro" id="IPR012340">
    <property type="entry name" value="NA-bd_OB-fold"/>
</dbReference>
<dbReference type="InterPro" id="IPR004365">
    <property type="entry name" value="NA-bd_OB_tRNA"/>
</dbReference>
<dbReference type="NCBIfam" id="TIGR00499">
    <property type="entry name" value="lysS_bact"/>
    <property type="match status" value="1"/>
</dbReference>
<dbReference type="NCBIfam" id="NF001756">
    <property type="entry name" value="PRK00484.1"/>
    <property type="match status" value="1"/>
</dbReference>
<dbReference type="NCBIfam" id="NF009101">
    <property type="entry name" value="PRK12445.1"/>
    <property type="match status" value="1"/>
</dbReference>
<dbReference type="PANTHER" id="PTHR42918:SF15">
    <property type="entry name" value="LYSINE--TRNA LIGASE, CHLOROPLASTIC_MITOCHONDRIAL"/>
    <property type="match status" value="1"/>
</dbReference>
<dbReference type="PANTHER" id="PTHR42918">
    <property type="entry name" value="LYSYL-TRNA SYNTHETASE"/>
    <property type="match status" value="1"/>
</dbReference>
<dbReference type="Pfam" id="PF00152">
    <property type="entry name" value="tRNA-synt_2"/>
    <property type="match status" value="1"/>
</dbReference>
<dbReference type="Pfam" id="PF01336">
    <property type="entry name" value="tRNA_anti-codon"/>
    <property type="match status" value="1"/>
</dbReference>
<dbReference type="PIRSF" id="PIRSF039101">
    <property type="entry name" value="LysRS2"/>
    <property type="match status" value="1"/>
</dbReference>
<dbReference type="PRINTS" id="PR00982">
    <property type="entry name" value="TRNASYNTHLYS"/>
</dbReference>
<dbReference type="SUPFAM" id="SSF55681">
    <property type="entry name" value="Class II aaRS and biotin synthetases"/>
    <property type="match status" value="1"/>
</dbReference>
<dbReference type="SUPFAM" id="SSF50249">
    <property type="entry name" value="Nucleic acid-binding proteins"/>
    <property type="match status" value="1"/>
</dbReference>
<dbReference type="PROSITE" id="PS50862">
    <property type="entry name" value="AA_TRNA_LIGASE_II"/>
    <property type="match status" value="1"/>
</dbReference>
<proteinExistence type="inferred from homology"/>
<sequence length="505" mass="57575">MSEQNAQGADEVVDLNNEMKARREKLAALREQGIPFPNDFRRDRTSDQLHAEFDAKEAEELEALNIEVSVAGRMMTRRIMGKASFVTLQDVGGRIQLYVARDDLPEGVYNEQFKKWDLGDILGAKGKLFKTKTGELSIHCTELRLLTKALRPLPDKFHGLQDQEARYRQRYLDLISNDESRNTFKTRSKILAGIRQFMVARGFMEVETPMMQVIPGGASARPFITHHNALDLDMYLRIAPELYLKRLVVGGFERVFEINRNFRNEGISVRHNPEFTMMELYMAYADYKDLIELTESLFRTLAQDVLGTTQVPYGDEVFDFGKPFEKLTMREAIKKYRPETDMADLDNFDSAKAIAESIGIHVEKSWGLGRIVTEIFDEVAEAHLIQPTFITEYPAEVSPLARRNDVNPEITDRFEFFIGGREIGNGFSELNDAEDQAQRFLDQVNAKAAGDDEAMFYDEDYVTALEHGLPPTAGLGIGIDRMVMLFTNSHTIRDVILFPAMRPVK</sequence>
<evidence type="ECO:0000255" key="1">
    <source>
        <dbReference type="HAMAP-Rule" id="MF_00252"/>
    </source>
</evidence>
<feature type="chain" id="PRO_1000078508" description="Lysine--tRNA ligase">
    <location>
        <begin position="1"/>
        <end position="505"/>
    </location>
</feature>
<feature type="binding site" evidence="1">
    <location>
        <position position="415"/>
    </location>
    <ligand>
        <name>Mg(2+)</name>
        <dbReference type="ChEBI" id="CHEBI:18420"/>
        <label>1</label>
    </ligand>
</feature>
<feature type="binding site" evidence="1">
    <location>
        <position position="422"/>
    </location>
    <ligand>
        <name>Mg(2+)</name>
        <dbReference type="ChEBI" id="CHEBI:18420"/>
        <label>1</label>
    </ligand>
</feature>
<feature type="binding site" evidence="1">
    <location>
        <position position="422"/>
    </location>
    <ligand>
        <name>Mg(2+)</name>
        <dbReference type="ChEBI" id="CHEBI:18420"/>
        <label>2</label>
    </ligand>
</feature>
<protein>
    <recommendedName>
        <fullName evidence="1">Lysine--tRNA ligase</fullName>
        <ecNumber evidence="1">6.1.1.6</ecNumber>
    </recommendedName>
    <alternativeName>
        <fullName evidence="1">Lysyl-tRNA synthetase</fullName>
        <shortName evidence="1">LysRS</shortName>
    </alternativeName>
</protein>
<keyword id="KW-0030">Aminoacyl-tRNA synthetase</keyword>
<keyword id="KW-0067">ATP-binding</keyword>
<keyword id="KW-0963">Cytoplasm</keyword>
<keyword id="KW-0436">Ligase</keyword>
<keyword id="KW-0460">Magnesium</keyword>
<keyword id="KW-0479">Metal-binding</keyword>
<keyword id="KW-0547">Nucleotide-binding</keyword>
<keyword id="KW-0648">Protein biosynthesis</keyword>
<reference key="1">
    <citation type="submission" date="2007-11" db="EMBL/GenBank/DDBJ databases">
        <authorList>
            <consortium name="The Salmonella enterica serovar Paratyphi B Genome Sequencing Project"/>
            <person name="McClelland M."/>
            <person name="Sanderson E.K."/>
            <person name="Porwollik S."/>
            <person name="Spieth J."/>
            <person name="Clifton W.S."/>
            <person name="Fulton R."/>
            <person name="Cordes M."/>
            <person name="Wollam A."/>
            <person name="Shah N."/>
            <person name="Pepin K."/>
            <person name="Bhonagiri V."/>
            <person name="Nash W."/>
            <person name="Johnson M."/>
            <person name="Thiruvilangam P."/>
            <person name="Wilson R."/>
        </authorList>
    </citation>
    <scope>NUCLEOTIDE SEQUENCE [LARGE SCALE GENOMIC DNA]</scope>
    <source>
        <strain>ATCC BAA-1250 / SPB7</strain>
    </source>
</reference>
<accession>A9N3L6</accession>
<gene>
    <name evidence="1" type="primary">lysS</name>
    <name type="ordered locus">SPAB_03787</name>
</gene>
<name>SYK_SALPB</name>